<name>LAPT_MANHA</name>
<accession>P49618</accession>
<comment type="function">
    <text>Binds arginine; part of the arginine periplasmic transport system.</text>
</comment>
<comment type="subcellular location">
    <subcellularLocation>
        <location evidence="1">Periplasm</location>
    </subcellularLocation>
</comment>
<comment type="similarity">
    <text evidence="3">Belongs to the bacterial solute-binding protein 3 family.</text>
</comment>
<reference key="1">
    <citation type="journal article" date="1993" name="Infect. Immun.">
        <title>Expression of the Pasteurella haemolytica leukotoxin is inhibited by a locus that encodes an ATP-binding cassette homolog.</title>
        <authorList>
            <person name="Highlander S.K."/>
            <person name="Wickersham E.A."/>
            <person name="Garza O."/>
            <person name="Weinstock G.M."/>
        </authorList>
    </citation>
    <scope>NUCLEOTIDE SEQUENCE [GENOMIC DNA]</scope>
    <source>
        <strain>Serotype A1 / PH101</strain>
    </source>
</reference>
<reference key="2">
    <citation type="journal article" date="1993" name="Infect. Immun.">
        <authorList>
            <person name="Highlander S.K."/>
            <person name="Wickersham E.A."/>
            <person name="Garza O."/>
            <person name="Weinstock G.M."/>
        </authorList>
    </citation>
    <scope>ERRATUM OF PUBMED:8359916</scope>
</reference>
<sequence length="237" mass="26514">MKKTLLTLLFGCVVTAQAQDIIVMEPSYPPFEMTEEKGEIIGFDVDIANAICKEMNANCTFHSQPFDSLIQSLKQKQFDAAISGMGITEPRKKQVLFSEPYFPSSAAFIAKKDTDFAKVKTIGVQNGTTYQHYLAKEKKEYNVKSYASYQNAILDVQNGRIDAIFGDVPVLAEMARKHEGLDFVGEKINNPNYFGDGLGIATHLKNQVLVDQFNAALKTIKENGEYQKIYDKWMGGK</sequence>
<dbReference type="EMBL" id="M59210">
    <property type="protein sequence ID" value="AAA25536.1"/>
    <property type="molecule type" value="Genomic_DNA"/>
</dbReference>
<dbReference type="SMR" id="P49618"/>
<dbReference type="STRING" id="75985.WC39_13360"/>
<dbReference type="GO" id="GO:0016020">
    <property type="term" value="C:membrane"/>
    <property type="evidence" value="ECO:0007669"/>
    <property type="project" value="InterPro"/>
</dbReference>
<dbReference type="GO" id="GO:0042597">
    <property type="term" value="C:periplasmic space"/>
    <property type="evidence" value="ECO:0007669"/>
    <property type="project" value="UniProtKB-SubCell"/>
</dbReference>
<dbReference type="GO" id="GO:0015276">
    <property type="term" value="F:ligand-gated monoatomic ion channel activity"/>
    <property type="evidence" value="ECO:0007669"/>
    <property type="project" value="InterPro"/>
</dbReference>
<dbReference type="GO" id="GO:0006865">
    <property type="term" value="P:amino acid transport"/>
    <property type="evidence" value="ECO:0007669"/>
    <property type="project" value="UniProtKB-KW"/>
</dbReference>
<dbReference type="CDD" id="cd13700">
    <property type="entry name" value="PBP2_Arg_STM4351"/>
    <property type="match status" value="1"/>
</dbReference>
<dbReference type="Gene3D" id="3.40.190.10">
    <property type="entry name" value="Periplasmic binding protein-like II"/>
    <property type="match status" value="2"/>
</dbReference>
<dbReference type="InterPro" id="IPR001320">
    <property type="entry name" value="Iontro_rcpt_C"/>
</dbReference>
<dbReference type="InterPro" id="IPR018313">
    <property type="entry name" value="SBP_3_CS"/>
</dbReference>
<dbReference type="InterPro" id="IPR001638">
    <property type="entry name" value="Solute-binding_3/MltF_N"/>
</dbReference>
<dbReference type="PANTHER" id="PTHR35936:SF20">
    <property type="entry name" value="ABC TRANSPORTER ARGININE-BINDING PROTEIN 2-RELATED"/>
    <property type="match status" value="1"/>
</dbReference>
<dbReference type="PANTHER" id="PTHR35936">
    <property type="entry name" value="MEMBRANE-BOUND LYTIC MUREIN TRANSGLYCOSYLASE F"/>
    <property type="match status" value="1"/>
</dbReference>
<dbReference type="Pfam" id="PF00497">
    <property type="entry name" value="SBP_bac_3"/>
    <property type="match status" value="1"/>
</dbReference>
<dbReference type="SMART" id="SM00062">
    <property type="entry name" value="PBPb"/>
    <property type="match status" value="1"/>
</dbReference>
<dbReference type="SMART" id="SM00079">
    <property type="entry name" value="PBPe"/>
    <property type="match status" value="1"/>
</dbReference>
<dbReference type="SUPFAM" id="SSF53850">
    <property type="entry name" value="Periplasmic binding protein-like II"/>
    <property type="match status" value="1"/>
</dbReference>
<dbReference type="PROSITE" id="PS01039">
    <property type="entry name" value="SBP_BACTERIAL_3"/>
    <property type="match status" value="1"/>
</dbReference>
<evidence type="ECO:0000250" key="1"/>
<evidence type="ECO:0000255" key="2"/>
<evidence type="ECO:0000305" key="3"/>
<organism>
    <name type="scientific">Mannheimia haemolytica</name>
    <name type="common">Pasteurella haemolytica</name>
    <dbReference type="NCBI Taxonomy" id="75985"/>
    <lineage>
        <taxon>Bacteria</taxon>
        <taxon>Pseudomonadati</taxon>
        <taxon>Pseudomonadota</taxon>
        <taxon>Gammaproteobacteria</taxon>
        <taxon>Pasteurellales</taxon>
        <taxon>Pasteurellaceae</taxon>
        <taxon>Mannheimia</taxon>
    </lineage>
</organism>
<feature type="signal peptide" evidence="2">
    <location>
        <begin position="1"/>
        <end position="18"/>
    </location>
</feature>
<feature type="chain" id="PRO_0000031766" description="Arginine-binding periplasmic protein">
    <location>
        <begin position="19"/>
        <end position="237"/>
    </location>
</feature>
<proteinExistence type="inferred from homology"/>
<keyword id="KW-0029">Amino-acid transport</keyword>
<keyword id="KW-0574">Periplasm</keyword>
<keyword id="KW-0732">Signal</keyword>
<keyword id="KW-0813">Transport</keyword>
<gene>
    <name type="primary">lapT</name>
</gene>
<protein>
    <recommendedName>
        <fullName>Arginine-binding periplasmic protein</fullName>
    </recommendedName>
</protein>